<feature type="chain" id="PRO_1000021843" description="Homoserine O-succinyltransferase">
    <location>
        <begin position="1"/>
        <end position="309"/>
    </location>
</feature>
<feature type="active site" description="Acyl-thioester intermediate" evidence="1">
    <location>
        <position position="142"/>
    </location>
</feature>
<feature type="active site" description="Proton acceptor" evidence="1">
    <location>
        <position position="235"/>
    </location>
</feature>
<feature type="active site" evidence="1">
    <location>
        <position position="237"/>
    </location>
</feature>
<feature type="binding site" evidence="1">
    <location>
        <position position="163"/>
    </location>
    <ligand>
        <name>substrate</name>
    </ligand>
</feature>
<feature type="binding site" evidence="1">
    <location>
        <position position="192"/>
    </location>
    <ligand>
        <name>substrate</name>
    </ligand>
</feature>
<feature type="binding site" evidence="1">
    <location>
        <position position="249"/>
    </location>
    <ligand>
        <name>substrate</name>
    </ligand>
</feature>
<feature type="site" description="Important for acyl-CoA specificity" evidence="1">
    <location>
        <position position="111"/>
    </location>
</feature>
<feature type="site" description="Important for substrate specificity" evidence="1">
    <location>
        <position position="192"/>
    </location>
</feature>
<proteinExistence type="inferred from homology"/>
<gene>
    <name evidence="1" type="primary">metAS</name>
    <name type="ordered locus">SBO_4033</name>
</gene>
<reference key="1">
    <citation type="journal article" date="2005" name="Nucleic Acids Res.">
        <title>Genome dynamics and diversity of Shigella species, the etiologic agents of bacillary dysentery.</title>
        <authorList>
            <person name="Yang F."/>
            <person name="Yang J."/>
            <person name="Zhang X."/>
            <person name="Chen L."/>
            <person name="Jiang Y."/>
            <person name="Yan Y."/>
            <person name="Tang X."/>
            <person name="Wang J."/>
            <person name="Xiong Z."/>
            <person name="Dong J."/>
            <person name="Xue Y."/>
            <person name="Zhu Y."/>
            <person name="Xu X."/>
            <person name="Sun L."/>
            <person name="Chen S."/>
            <person name="Nie H."/>
            <person name="Peng J."/>
            <person name="Xu J."/>
            <person name="Wang Y."/>
            <person name="Yuan Z."/>
            <person name="Wen Y."/>
            <person name="Yao Z."/>
            <person name="Shen Y."/>
            <person name="Qiang B."/>
            <person name="Hou Y."/>
            <person name="Yu J."/>
            <person name="Jin Q."/>
        </authorList>
    </citation>
    <scope>NUCLEOTIDE SEQUENCE [LARGE SCALE GENOMIC DNA]</scope>
    <source>
        <strain>Sb227</strain>
    </source>
</reference>
<keyword id="KW-0012">Acyltransferase</keyword>
<keyword id="KW-0028">Amino-acid biosynthesis</keyword>
<keyword id="KW-0963">Cytoplasm</keyword>
<keyword id="KW-0486">Methionine biosynthesis</keyword>
<keyword id="KW-0808">Transferase</keyword>
<organism>
    <name type="scientific">Shigella boydii serotype 4 (strain Sb227)</name>
    <dbReference type="NCBI Taxonomy" id="300268"/>
    <lineage>
        <taxon>Bacteria</taxon>
        <taxon>Pseudomonadati</taxon>
        <taxon>Pseudomonadota</taxon>
        <taxon>Gammaproteobacteria</taxon>
        <taxon>Enterobacterales</taxon>
        <taxon>Enterobacteriaceae</taxon>
        <taxon>Shigella</taxon>
    </lineage>
</organism>
<evidence type="ECO:0000255" key="1">
    <source>
        <dbReference type="HAMAP-Rule" id="MF_00295"/>
    </source>
</evidence>
<dbReference type="EC" id="2.3.1.46" evidence="1"/>
<dbReference type="EMBL" id="CP000036">
    <property type="protein sequence ID" value="ABB68469.1"/>
    <property type="molecule type" value="Genomic_DNA"/>
</dbReference>
<dbReference type="SMR" id="Q31TY9"/>
<dbReference type="KEGG" id="sbo:SBO_4033"/>
<dbReference type="HOGENOM" id="CLU_057851_0_1_6"/>
<dbReference type="UniPathway" id="UPA00051">
    <property type="reaction ID" value="UER00075"/>
</dbReference>
<dbReference type="Proteomes" id="UP000007067">
    <property type="component" value="Chromosome"/>
</dbReference>
<dbReference type="GO" id="GO:0005737">
    <property type="term" value="C:cytoplasm"/>
    <property type="evidence" value="ECO:0007669"/>
    <property type="project" value="UniProtKB-SubCell"/>
</dbReference>
<dbReference type="GO" id="GO:0004414">
    <property type="term" value="F:homoserine O-acetyltransferase activity"/>
    <property type="evidence" value="ECO:0007669"/>
    <property type="project" value="UniProtKB-UniRule"/>
</dbReference>
<dbReference type="GO" id="GO:0008899">
    <property type="term" value="F:homoserine O-succinyltransferase activity"/>
    <property type="evidence" value="ECO:0007669"/>
    <property type="project" value="UniProtKB-EC"/>
</dbReference>
<dbReference type="GO" id="GO:0019281">
    <property type="term" value="P:L-methionine biosynthetic process from homoserine via O-succinyl-L-homoserine and cystathionine"/>
    <property type="evidence" value="ECO:0007669"/>
    <property type="project" value="InterPro"/>
</dbReference>
<dbReference type="CDD" id="cd03131">
    <property type="entry name" value="GATase1_HTS"/>
    <property type="match status" value="1"/>
</dbReference>
<dbReference type="FunFam" id="3.40.50.880:FF:000004">
    <property type="entry name" value="Homoserine O-succinyltransferase"/>
    <property type="match status" value="1"/>
</dbReference>
<dbReference type="Gene3D" id="3.40.50.880">
    <property type="match status" value="1"/>
</dbReference>
<dbReference type="HAMAP" id="MF_00295">
    <property type="entry name" value="MetA_acyltransf"/>
    <property type="match status" value="1"/>
</dbReference>
<dbReference type="InterPro" id="IPR029062">
    <property type="entry name" value="Class_I_gatase-like"/>
</dbReference>
<dbReference type="InterPro" id="IPR005697">
    <property type="entry name" value="HST_MetA"/>
</dbReference>
<dbReference type="InterPro" id="IPR033752">
    <property type="entry name" value="MetA_family"/>
</dbReference>
<dbReference type="NCBIfam" id="TIGR01001">
    <property type="entry name" value="metA"/>
    <property type="match status" value="1"/>
</dbReference>
<dbReference type="PANTHER" id="PTHR20919">
    <property type="entry name" value="HOMOSERINE O-SUCCINYLTRANSFERASE"/>
    <property type="match status" value="1"/>
</dbReference>
<dbReference type="PANTHER" id="PTHR20919:SF0">
    <property type="entry name" value="HOMOSERINE O-SUCCINYLTRANSFERASE"/>
    <property type="match status" value="1"/>
</dbReference>
<dbReference type="Pfam" id="PF04204">
    <property type="entry name" value="HTS"/>
    <property type="match status" value="1"/>
</dbReference>
<dbReference type="PIRSF" id="PIRSF000450">
    <property type="entry name" value="H_ser_succinyltr"/>
    <property type="match status" value="1"/>
</dbReference>
<dbReference type="SUPFAM" id="SSF52317">
    <property type="entry name" value="Class I glutamine amidotransferase-like"/>
    <property type="match status" value="1"/>
</dbReference>
<name>METAS_SHIBS</name>
<comment type="function">
    <text evidence="1">Transfers a succinyl group from succinyl-CoA to L-homoserine, forming succinyl-L-homoserine.</text>
</comment>
<comment type="catalytic activity">
    <reaction evidence="1">
        <text>L-homoserine + succinyl-CoA = O-succinyl-L-homoserine + CoA</text>
        <dbReference type="Rhea" id="RHEA:22008"/>
        <dbReference type="ChEBI" id="CHEBI:57287"/>
        <dbReference type="ChEBI" id="CHEBI:57292"/>
        <dbReference type="ChEBI" id="CHEBI:57476"/>
        <dbReference type="ChEBI" id="CHEBI:57661"/>
        <dbReference type="EC" id="2.3.1.46"/>
    </reaction>
</comment>
<comment type="pathway">
    <text evidence="1">Amino-acid biosynthesis; L-methionine biosynthesis via de novo pathway; O-succinyl-L-homoserine from L-homoserine: step 1/1.</text>
</comment>
<comment type="subunit">
    <text evidence="1">Homodimer.</text>
</comment>
<comment type="subcellular location">
    <subcellularLocation>
        <location evidence="1">Cytoplasm</location>
    </subcellularLocation>
</comment>
<comment type="similarity">
    <text evidence="1">Belongs to the MetA family.</text>
</comment>
<accession>Q31TY9</accession>
<protein>
    <recommendedName>
        <fullName evidence="1">Homoserine O-succinyltransferase</fullName>
        <shortName evidence="1">HST</shortName>
        <ecNumber evidence="1">2.3.1.46</ecNumber>
    </recommendedName>
    <alternativeName>
        <fullName evidence="1">Homoserine transsuccinylase</fullName>
        <shortName evidence="1">HTS</shortName>
    </alternativeName>
</protein>
<sequence>MPIRVPDELPAVNFLREENVFVMTTSRASGQEIRPLKVLILNLMPKKIETENQFLRLLSNSPLQVDIQLLRIDSRESRNTPAEHLNNFYCNFEDIQEQNFDGLIVTGAPLGLVEFNDVAYWPQIKQVLEWSKDHVTSTLFVCWAVQAALNILYGIPKQTRTDKLSGVYEHHILHPHALLTRGFDDSFLAPHSRYADFPAALIRDYTDLEILAETEEGDAYLFASKDKRIAFVTGHPEYDAQTLAQEYFRDVEAGLDPEVPYNYFPHNDPQNTPRASWRSHGNLLFTNWLNYYVYQITPYDLRHMNPTLD</sequence>